<sequence length="138" mass="15932">MSGEEEENAAELKIGDEFLKAKCLMNCEVSLILEHKFEQLQQISEDPMNQVSQVFEKSLQYVKRFSRYKNPDAVRQVREILSRHQLTEFELCVLGNLCPETVEEAVAMVPSLKTKGRAHDDEAIEKMLNDLSLVKRFE</sequence>
<protein>
    <recommendedName>
        <fullName>DNA-directed RNA polymerase II subunit 4</fullName>
    </recommendedName>
    <alternativeName>
        <fullName>15.9 kDa subunit of RNA polymerase II</fullName>
    </alternativeName>
    <alternativeName>
        <fullName>DNA-directed RNA polymerase II subunit D</fullName>
    </alternativeName>
</protein>
<accession>O48890</accession>
<feature type="initiator methionine" description="Removed" evidence="5">
    <location>
        <position position="1"/>
    </location>
</feature>
<feature type="chain" id="PRO_0000423331" description="DNA-directed RNA polymerase II subunit 4">
    <location>
        <begin position="2"/>
        <end position="138"/>
    </location>
</feature>
<feature type="modified residue" description="N-acetylserine" evidence="5">
    <location>
        <position position="2"/>
    </location>
</feature>
<evidence type="ECO:0000250" key="1"/>
<evidence type="ECO:0000269" key="2">
    <source>
    </source>
</evidence>
<evidence type="ECO:0000269" key="3">
    <source>
    </source>
</evidence>
<evidence type="ECO:0000305" key="4"/>
<evidence type="ECO:0007744" key="5">
    <source>
    </source>
</evidence>
<comment type="function">
    <text evidence="2">DNA-dependent RNA polymerase catalyzes the transcription of DNA into RNA using the four ribonucleoside triphosphates as substrates. Second largest component of RNA polymerase II which synthesizes mRNA precursors and many functional non-coding RNAs. Proposed to contribute to the polymerase catalytic activity and forms the polymerase active center together with the largest subunit. Pol II is the central component of the basal RNA polymerase II transcription machinery. It is composed of mobile elements that move relative to each other.</text>
</comment>
<comment type="subunit">
    <text evidence="2 3">Component of the RNA polymerase II complex consisting of at least 12 subunits. Interacts with NRPB7.</text>
</comment>
<comment type="subcellular location">
    <subcellularLocation>
        <location evidence="1">Nucleus</location>
    </subcellularLocation>
</comment>
<comment type="similarity">
    <text evidence="4">Belongs to the eukaryotic RPB4 RNA polymerase subunit family.</text>
</comment>
<proteinExistence type="evidence at protein level"/>
<keyword id="KW-0007">Acetylation</keyword>
<keyword id="KW-0240">DNA-directed RNA polymerase</keyword>
<keyword id="KW-0539">Nucleus</keyword>
<keyword id="KW-1185">Reference proteome</keyword>
<keyword id="KW-0804">Transcription</keyword>
<gene>
    <name type="primary">NRPB4</name>
    <name type="synonym">RPB15.9</name>
    <name type="synonym">RPB4</name>
    <name type="ordered locus">At5g09920</name>
    <name type="ORF">MYH9.13</name>
</gene>
<organism>
    <name type="scientific">Arabidopsis thaliana</name>
    <name type="common">Mouse-ear cress</name>
    <dbReference type="NCBI Taxonomy" id="3702"/>
    <lineage>
        <taxon>Eukaryota</taxon>
        <taxon>Viridiplantae</taxon>
        <taxon>Streptophyta</taxon>
        <taxon>Embryophyta</taxon>
        <taxon>Tracheophyta</taxon>
        <taxon>Spermatophyta</taxon>
        <taxon>Magnoliopsida</taxon>
        <taxon>eudicotyledons</taxon>
        <taxon>Gunneridae</taxon>
        <taxon>Pentapetalae</taxon>
        <taxon>rosids</taxon>
        <taxon>malvids</taxon>
        <taxon>Brassicales</taxon>
        <taxon>Brassicaceae</taxon>
        <taxon>Camelineae</taxon>
        <taxon>Arabidopsis</taxon>
    </lineage>
</organism>
<reference key="1">
    <citation type="journal article" date="1998" name="J. Biol. Chem.">
        <title>Two small subunits in Arabidopsis RNA polymerase II are related to yeast RPB4 and RPB7 and interact with one another.</title>
        <authorList>
            <person name="Larkin R.M."/>
            <person name="Guilfoyle T.J."/>
        </authorList>
    </citation>
    <scope>NUCLEOTIDE SEQUENCE [MRNA]</scope>
    <scope>SUBUNIT</scope>
    <scope>INTERACTION WITH NRPB7</scope>
</reference>
<reference key="2">
    <citation type="journal article" date="1998" name="DNA Res.">
        <title>Structural analysis of Arabidopsis thaliana chromosome 5. VIII. Sequence features of the regions of 1,081,958 bp covered by seventeen physically assigned P1 and TAC clones.</title>
        <authorList>
            <person name="Asamizu E."/>
            <person name="Sato S."/>
            <person name="Kaneko T."/>
            <person name="Nakamura Y."/>
            <person name="Kotani H."/>
            <person name="Miyajima N."/>
            <person name="Tabata S."/>
        </authorList>
    </citation>
    <scope>NUCLEOTIDE SEQUENCE [LARGE SCALE GENOMIC DNA]</scope>
    <source>
        <strain>cv. Columbia</strain>
    </source>
</reference>
<reference key="3">
    <citation type="journal article" date="2017" name="Plant J.">
        <title>Araport11: a complete reannotation of the Arabidopsis thaliana reference genome.</title>
        <authorList>
            <person name="Cheng C.Y."/>
            <person name="Krishnakumar V."/>
            <person name="Chan A.P."/>
            <person name="Thibaud-Nissen F."/>
            <person name="Schobel S."/>
            <person name="Town C.D."/>
        </authorList>
    </citation>
    <scope>GENOME REANNOTATION</scope>
    <source>
        <strain>cv. Columbia</strain>
    </source>
</reference>
<reference key="4">
    <citation type="submission" date="2006-05" db="EMBL/GenBank/DDBJ databases">
        <title>Arabidopsis ORF clones.</title>
        <authorList>
            <person name="Kim C.J."/>
            <person name="Chen H."/>
            <person name="Quinitio C."/>
            <person name="Shinn P."/>
            <person name="Ecker J.R."/>
        </authorList>
    </citation>
    <scope>NUCLEOTIDE SEQUENCE [LARGE SCALE MRNA]</scope>
</reference>
<reference key="5">
    <citation type="journal article" date="2009" name="DNA Res.">
        <title>Analysis of multiple occurrences of alternative splicing events in Arabidopsis thaliana using novel sequenced full-length cDNAs.</title>
        <authorList>
            <person name="Iida K."/>
            <person name="Fukami-Kobayashi K."/>
            <person name="Toyoda A."/>
            <person name="Sakaki Y."/>
            <person name="Kobayashi M."/>
            <person name="Seki M."/>
            <person name="Shinozaki K."/>
        </authorList>
    </citation>
    <scope>NUCLEOTIDE SEQUENCE [LARGE SCALE MRNA]</scope>
    <source>
        <strain>cv. Columbia</strain>
        <tissue>Rosette leaf</tissue>
    </source>
</reference>
<reference key="6">
    <citation type="submission" date="2002-03" db="EMBL/GenBank/DDBJ databases">
        <title>Full-length cDNA from Arabidopsis thaliana.</title>
        <authorList>
            <person name="Brover V.V."/>
            <person name="Troukhan M.E."/>
            <person name="Alexandrov N.A."/>
            <person name="Lu Y.-P."/>
            <person name="Flavell R.B."/>
            <person name="Feldmann K.A."/>
        </authorList>
    </citation>
    <scope>NUCLEOTIDE SEQUENCE [LARGE SCALE MRNA]</scope>
</reference>
<reference key="7">
    <citation type="journal article" date="2009" name="Mol. Cell">
        <title>Subunit compositions of the RNA-silencing enzymes Pol IV and Pol V reveal their origins as specialized forms of RNA polymerase II.</title>
        <authorList>
            <person name="Ream T.S."/>
            <person name="Haag J.R."/>
            <person name="Wierzbicki A.T."/>
            <person name="Nicora C.D."/>
            <person name="Norbeck A.D."/>
            <person name="Zhu J.K."/>
            <person name="Hagen G."/>
            <person name="Guilfoyle T.J."/>
            <person name="Pasa-Tolic L."/>
            <person name="Pikaard C.S."/>
        </authorList>
    </citation>
    <scope>FUNCTION</scope>
    <scope>IDENTIFICATION BY MASS SPECTROMETRY</scope>
    <scope>SUBUNIT</scope>
    <scope>NOMENCLATURE</scope>
</reference>
<reference key="8">
    <citation type="journal article" date="2012" name="Mol. Cell. Proteomics">
        <title>Comparative large-scale characterisation of plant vs. mammal proteins reveals similar and idiosyncratic N-alpha acetylation features.</title>
        <authorList>
            <person name="Bienvenut W.V."/>
            <person name="Sumpton D."/>
            <person name="Martinez A."/>
            <person name="Lilla S."/>
            <person name="Espagne C."/>
            <person name="Meinnel T."/>
            <person name="Giglione C."/>
        </authorList>
    </citation>
    <scope>ACETYLATION [LARGE SCALE ANALYSIS] AT SER-2</scope>
    <scope>CLEAVAGE OF INITIATOR METHIONINE [LARGE SCALE ANALYSIS]</scope>
    <scope>IDENTIFICATION BY MASS SPECTROMETRY [LARGE SCALE ANALYSIS]</scope>
</reference>
<dbReference type="EMBL" id="AF016511">
    <property type="protein sequence ID" value="AAB95261.1"/>
    <property type="molecule type" value="mRNA"/>
</dbReference>
<dbReference type="EMBL" id="AB016893">
    <property type="protein sequence ID" value="BAB09413.1"/>
    <property type="molecule type" value="Genomic_DNA"/>
</dbReference>
<dbReference type="EMBL" id="CP002688">
    <property type="protein sequence ID" value="AED91467.1"/>
    <property type="molecule type" value="Genomic_DNA"/>
</dbReference>
<dbReference type="EMBL" id="BT025500">
    <property type="protein sequence ID" value="ABF58918.1"/>
    <property type="molecule type" value="mRNA"/>
</dbReference>
<dbReference type="EMBL" id="AK317113">
    <property type="protein sequence ID" value="BAH19801.1"/>
    <property type="molecule type" value="mRNA"/>
</dbReference>
<dbReference type="EMBL" id="AY086086">
    <property type="protein sequence ID" value="AAM63291.1"/>
    <property type="molecule type" value="mRNA"/>
</dbReference>
<dbReference type="RefSeq" id="NP_196554.1">
    <property type="nucleotide sequence ID" value="NM_121029.3"/>
</dbReference>
<dbReference type="SMR" id="O48890"/>
<dbReference type="BioGRID" id="16131">
    <property type="interactions" value="12"/>
</dbReference>
<dbReference type="FunCoup" id="O48890">
    <property type="interactions" value="4326"/>
</dbReference>
<dbReference type="STRING" id="3702.O48890"/>
<dbReference type="iPTMnet" id="O48890"/>
<dbReference type="PaxDb" id="3702-AT5G09920.1"/>
<dbReference type="ProteomicsDB" id="250566"/>
<dbReference type="EnsemblPlants" id="AT5G09920.1">
    <property type="protein sequence ID" value="AT5G09920.1"/>
    <property type="gene ID" value="AT5G09920"/>
</dbReference>
<dbReference type="GeneID" id="830853"/>
<dbReference type="Gramene" id="AT5G09920.1">
    <property type="protein sequence ID" value="AT5G09920.1"/>
    <property type="gene ID" value="AT5G09920"/>
</dbReference>
<dbReference type="KEGG" id="ath:AT5G09920"/>
<dbReference type="Araport" id="AT5G09920"/>
<dbReference type="TAIR" id="AT5G09920">
    <property type="gene designation" value="NRPB4"/>
</dbReference>
<dbReference type="eggNOG" id="KOG2351">
    <property type="taxonomic scope" value="Eukaryota"/>
</dbReference>
<dbReference type="HOGENOM" id="CLU_110332_1_0_1"/>
<dbReference type="InParanoid" id="O48890"/>
<dbReference type="OMA" id="HRKTQNE"/>
<dbReference type="OrthoDB" id="2186918at2759"/>
<dbReference type="PhylomeDB" id="O48890"/>
<dbReference type="PRO" id="PR:O48890"/>
<dbReference type="Proteomes" id="UP000006548">
    <property type="component" value="Chromosome 5"/>
</dbReference>
<dbReference type="ExpressionAtlas" id="O48890">
    <property type="expression patterns" value="baseline and differential"/>
</dbReference>
<dbReference type="GO" id="GO:0005665">
    <property type="term" value="C:RNA polymerase II, core complex"/>
    <property type="evidence" value="ECO:0000314"/>
    <property type="project" value="UniProtKB"/>
</dbReference>
<dbReference type="GO" id="GO:0003899">
    <property type="term" value="F:DNA-directed RNA polymerase activity"/>
    <property type="evidence" value="ECO:0000314"/>
    <property type="project" value="TAIR"/>
</dbReference>
<dbReference type="GO" id="GO:0000166">
    <property type="term" value="F:nucleotide binding"/>
    <property type="evidence" value="ECO:0007669"/>
    <property type="project" value="InterPro"/>
</dbReference>
<dbReference type="GO" id="GO:0006352">
    <property type="term" value="P:DNA-templated transcription initiation"/>
    <property type="evidence" value="ECO:0007669"/>
    <property type="project" value="InterPro"/>
</dbReference>
<dbReference type="GO" id="GO:0006366">
    <property type="term" value="P:transcription by RNA polymerase II"/>
    <property type="evidence" value="ECO:0000304"/>
    <property type="project" value="TAIR"/>
</dbReference>
<dbReference type="FunFam" id="1.20.1250.40:FF:000004">
    <property type="entry name" value="Dna-directed rna polymerase ii subunit 4"/>
    <property type="match status" value="1"/>
</dbReference>
<dbReference type="Gene3D" id="1.20.1250.40">
    <property type="match status" value="1"/>
</dbReference>
<dbReference type="InterPro" id="IPR010997">
    <property type="entry name" value="HRDC-like_sf"/>
</dbReference>
<dbReference type="InterPro" id="IPR006590">
    <property type="entry name" value="RNA_pol_Rpb4/RPC9_core"/>
</dbReference>
<dbReference type="InterPro" id="IPR045222">
    <property type="entry name" value="Rpb4-like"/>
</dbReference>
<dbReference type="InterPro" id="IPR005574">
    <property type="entry name" value="Rpb4/RPC9"/>
</dbReference>
<dbReference type="InterPro" id="IPR038324">
    <property type="entry name" value="Rpb4/RPC9_sf"/>
</dbReference>
<dbReference type="PANTHER" id="PTHR21297">
    <property type="entry name" value="DNA-DIRECTED RNA POLYMERASE II"/>
    <property type="match status" value="1"/>
</dbReference>
<dbReference type="Pfam" id="PF03874">
    <property type="entry name" value="RNA_pol_Rpb4"/>
    <property type="match status" value="1"/>
</dbReference>
<dbReference type="SMART" id="SM00657">
    <property type="entry name" value="RPOL4c"/>
    <property type="match status" value="1"/>
</dbReference>
<dbReference type="SUPFAM" id="SSF47819">
    <property type="entry name" value="HRDC-like"/>
    <property type="match status" value="1"/>
</dbReference>
<name>NRPB4_ARATH</name>